<feature type="chain" id="PRO_0000458764" description="Cytosolic calcium-binding protein 3">
    <location>
        <begin position="1"/>
        <end position="95"/>
    </location>
</feature>
<feature type="repeat" description="1" evidence="5">
    <location>
        <begin position="30"/>
        <end position="35"/>
    </location>
</feature>
<feature type="repeat" description="2" evidence="5">
    <location>
        <begin position="39"/>
        <end position="43"/>
    </location>
</feature>
<feature type="repeat" description="3" evidence="5">
    <location>
        <begin position="54"/>
        <end position="59"/>
    </location>
</feature>
<feature type="repeat" description="4" evidence="5">
    <location>
        <begin position="67"/>
        <end position="71"/>
    </location>
</feature>
<feature type="repeat" description="5" evidence="5">
    <location>
        <begin position="75"/>
        <end position="79"/>
    </location>
</feature>
<feature type="repeat" description="6" evidence="5">
    <location>
        <begin position="90"/>
        <end position="94"/>
    </location>
</feature>
<feature type="region of interest" description="6 X 5 AA approximate repeats of V-E-E-K-K" evidence="5">
    <location>
        <begin position="30"/>
        <end position="94"/>
    </location>
</feature>
<feature type="region of interest" description="Disordered" evidence="2">
    <location>
        <begin position="54"/>
        <end position="95"/>
    </location>
</feature>
<feature type="compositionally biased region" description="Basic and acidic residues" evidence="2">
    <location>
        <begin position="55"/>
        <end position="80"/>
    </location>
</feature>
<reference key="1">
    <citation type="journal article" date="2000" name="Nature">
        <title>Sequence and analysis of chromosome 3 of the plant Arabidopsis thaliana.</title>
        <authorList>
            <person name="Salanoubat M."/>
            <person name="Lemcke K."/>
            <person name="Rieger M."/>
            <person name="Ansorge W."/>
            <person name="Unseld M."/>
            <person name="Fartmann B."/>
            <person name="Valle G."/>
            <person name="Bloecker H."/>
            <person name="Perez-Alonso M."/>
            <person name="Obermaier B."/>
            <person name="Delseny M."/>
            <person name="Boutry M."/>
            <person name="Grivell L.A."/>
            <person name="Mache R."/>
            <person name="Puigdomenech P."/>
            <person name="De Simone V."/>
            <person name="Choisne N."/>
            <person name="Artiguenave F."/>
            <person name="Robert C."/>
            <person name="Brottier P."/>
            <person name="Wincker P."/>
            <person name="Cattolico L."/>
            <person name="Weissenbach J."/>
            <person name="Saurin W."/>
            <person name="Quetier F."/>
            <person name="Schaefer M."/>
            <person name="Mueller-Auer S."/>
            <person name="Gabel C."/>
            <person name="Fuchs M."/>
            <person name="Benes V."/>
            <person name="Wurmbach E."/>
            <person name="Drzonek H."/>
            <person name="Erfle H."/>
            <person name="Jordan N."/>
            <person name="Bangert S."/>
            <person name="Wiedelmann R."/>
            <person name="Kranz H."/>
            <person name="Voss H."/>
            <person name="Holland R."/>
            <person name="Brandt P."/>
            <person name="Nyakatura G."/>
            <person name="Vezzi A."/>
            <person name="D'Angelo M."/>
            <person name="Pallavicini A."/>
            <person name="Toppo S."/>
            <person name="Simionati B."/>
            <person name="Conrad A."/>
            <person name="Hornischer K."/>
            <person name="Kauer G."/>
            <person name="Loehnert T.-H."/>
            <person name="Nordsiek G."/>
            <person name="Reichelt J."/>
            <person name="Scharfe M."/>
            <person name="Schoen O."/>
            <person name="Bargues M."/>
            <person name="Terol J."/>
            <person name="Climent J."/>
            <person name="Navarro P."/>
            <person name="Collado C."/>
            <person name="Perez-Perez A."/>
            <person name="Ottenwaelder B."/>
            <person name="Duchemin D."/>
            <person name="Cooke R."/>
            <person name="Laudie M."/>
            <person name="Berger-Llauro C."/>
            <person name="Purnelle B."/>
            <person name="Masuy D."/>
            <person name="de Haan M."/>
            <person name="Maarse A.C."/>
            <person name="Alcaraz J.-P."/>
            <person name="Cottet A."/>
            <person name="Casacuberta E."/>
            <person name="Monfort A."/>
            <person name="Argiriou A."/>
            <person name="Flores M."/>
            <person name="Liguori R."/>
            <person name="Vitale D."/>
            <person name="Mannhaupt G."/>
            <person name="Haase D."/>
            <person name="Schoof H."/>
            <person name="Rudd S."/>
            <person name="Zaccaria P."/>
            <person name="Mewes H.-W."/>
            <person name="Mayer K.F.X."/>
            <person name="Kaul S."/>
            <person name="Town C.D."/>
            <person name="Koo H.L."/>
            <person name="Tallon L.J."/>
            <person name="Jenkins J."/>
            <person name="Rooney T."/>
            <person name="Rizzo M."/>
            <person name="Walts A."/>
            <person name="Utterback T."/>
            <person name="Fujii C.Y."/>
            <person name="Shea T.P."/>
            <person name="Creasy T.H."/>
            <person name="Haas B."/>
            <person name="Maiti R."/>
            <person name="Wu D."/>
            <person name="Peterson J."/>
            <person name="Van Aken S."/>
            <person name="Pai G."/>
            <person name="Militscher J."/>
            <person name="Sellers P."/>
            <person name="Gill J.E."/>
            <person name="Feldblyum T.V."/>
            <person name="Preuss D."/>
            <person name="Lin X."/>
            <person name="Nierman W.C."/>
            <person name="Salzberg S.L."/>
            <person name="White O."/>
            <person name="Venter J.C."/>
            <person name="Fraser C.M."/>
            <person name="Kaneko T."/>
            <person name="Nakamura Y."/>
            <person name="Sato S."/>
            <person name="Kato T."/>
            <person name="Asamizu E."/>
            <person name="Sasamoto S."/>
            <person name="Kimura T."/>
            <person name="Idesawa K."/>
            <person name="Kawashima K."/>
            <person name="Kishida Y."/>
            <person name="Kiyokawa C."/>
            <person name="Kohara M."/>
            <person name="Matsumoto M."/>
            <person name="Matsuno A."/>
            <person name="Muraki A."/>
            <person name="Nakayama S."/>
            <person name="Nakazaki N."/>
            <person name="Shinpo S."/>
            <person name="Takeuchi C."/>
            <person name="Wada T."/>
            <person name="Watanabe A."/>
            <person name="Yamada M."/>
            <person name="Yasuda M."/>
            <person name="Tabata S."/>
        </authorList>
    </citation>
    <scope>NUCLEOTIDE SEQUENCE [LARGE SCALE GENOMIC DNA]</scope>
    <source>
        <strain>cv. Columbia</strain>
    </source>
</reference>
<reference key="2">
    <citation type="journal article" date="2017" name="Plant J.">
        <title>Araport11: a complete reannotation of the Arabidopsis thaliana reference genome.</title>
        <authorList>
            <person name="Cheng C.Y."/>
            <person name="Krishnakumar V."/>
            <person name="Chan A.P."/>
            <person name="Thibaud-Nissen F."/>
            <person name="Schobel S."/>
            <person name="Town C.D."/>
        </authorList>
    </citation>
    <scope>GENOME REANNOTATION</scope>
    <source>
        <strain>cv. Columbia</strain>
    </source>
</reference>
<reference key="3">
    <citation type="journal article" date="2003" name="Science">
        <title>Empirical analysis of transcriptional activity in the Arabidopsis genome.</title>
        <authorList>
            <person name="Yamada K."/>
            <person name="Lim J."/>
            <person name="Dale J.M."/>
            <person name="Chen H."/>
            <person name="Shinn P."/>
            <person name="Palm C.J."/>
            <person name="Southwick A.M."/>
            <person name="Wu H.C."/>
            <person name="Kim C.J."/>
            <person name="Nguyen M."/>
            <person name="Pham P.K."/>
            <person name="Cheuk R.F."/>
            <person name="Karlin-Newmann G."/>
            <person name="Liu S.X."/>
            <person name="Lam B."/>
            <person name="Sakano H."/>
            <person name="Wu T."/>
            <person name="Yu G."/>
            <person name="Miranda M."/>
            <person name="Quach H.L."/>
            <person name="Tripp M."/>
            <person name="Chang C.H."/>
            <person name="Lee J.M."/>
            <person name="Toriumi M.J."/>
            <person name="Chan M.M."/>
            <person name="Tang C.C."/>
            <person name="Onodera C.S."/>
            <person name="Deng J.M."/>
            <person name="Akiyama K."/>
            <person name="Ansari Y."/>
            <person name="Arakawa T."/>
            <person name="Banh J."/>
            <person name="Banno F."/>
            <person name="Bowser L."/>
            <person name="Brooks S.Y."/>
            <person name="Carninci P."/>
            <person name="Chao Q."/>
            <person name="Choy N."/>
            <person name="Enju A."/>
            <person name="Goldsmith A.D."/>
            <person name="Gurjal M."/>
            <person name="Hansen N.F."/>
            <person name="Hayashizaki Y."/>
            <person name="Johnson-Hopson C."/>
            <person name="Hsuan V.W."/>
            <person name="Iida K."/>
            <person name="Karnes M."/>
            <person name="Khan S."/>
            <person name="Koesema E."/>
            <person name="Ishida J."/>
            <person name="Jiang P.X."/>
            <person name="Jones T."/>
            <person name="Kawai J."/>
            <person name="Kamiya A."/>
            <person name="Meyers C."/>
            <person name="Nakajima M."/>
            <person name="Narusaka M."/>
            <person name="Seki M."/>
            <person name="Sakurai T."/>
            <person name="Satou M."/>
            <person name="Tamse R."/>
            <person name="Vaysberg M."/>
            <person name="Wallender E.K."/>
            <person name="Wong C."/>
            <person name="Yamamura Y."/>
            <person name="Yuan S."/>
            <person name="Shinozaki K."/>
            <person name="Davis R.W."/>
            <person name="Theologis A."/>
            <person name="Ecker J.R."/>
        </authorList>
    </citation>
    <scope>NUCLEOTIDE SEQUENCE [LARGE SCALE MRNA]</scope>
    <source>
        <strain>cv. Columbia</strain>
    </source>
</reference>
<reference key="4">
    <citation type="submission" date="2006-07" db="EMBL/GenBank/DDBJ databases">
        <title>Large-scale analysis of RIKEN Arabidopsis full-length (RAFL) cDNAs.</title>
        <authorList>
            <person name="Totoki Y."/>
            <person name="Seki M."/>
            <person name="Ishida J."/>
            <person name="Nakajima M."/>
            <person name="Enju A."/>
            <person name="Kamiya A."/>
            <person name="Narusaka M."/>
            <person name="Shin-i T."/>
            <person name="Nakagawa M."/>
            <person name="Sakamoto N."/>
            <person name="Oishi K."/>
            <person name="Kohara Y."/>
            <person name="Kobayashi M."/>
            <person name="Toyoda A."/>
            <person name="Sakaki Y."/>
            <person name="Sakurai T."/>
            <person name="Iida K."/>
            <person name="Akiyama K."/>
            <person name="Satou M."/>
            <person name="Toyoda T."/>
            <person name="Konagaya A."/>
            <person name="Carninci P."/>
            <person name="Kawai J."/>
            <person name="Hayashizaki Y."/>
            <person name="Shinozaki K."/>
        </authorList>
    </citation>
    <scope>NUCLEOTIDE SEQUENCE [LARGE SCALE MRNA]</scope>
    <source>
        <strain>cv. Columbia</strain>
    </source>
</reference>
<reference key="5">
    <citation type="journal article" date="2007" name="Plant Cell Physiol.">
        <title>Transcriptional induction of two genes for CCaPs, novel cytosolic proteins, in Arabidopsis thaliana in the dark.</title>
        <authorList>
            <person name="Ide Y."/>
            <person name="Tomioka R."/>
            <person name="Ouchi Y."/>
            <person name="Kamiya T."/>
            <person name="Maeshima M."/>
        </authorList>
    </citation>
    <scope>SUBCELLULAR LOCATION</scope>
    <scope>TISSUE SPECIFICITY</scope>
    <scope>REPRESSION BY METAL IONS AND SUGARS</scope>
    <scope>INDUCTION BY GIBBERELLIC ACID</scope>
</reference>
<reference key="6">
    <citation type="journal article" date="2009" name="J. Proteomics">
        <title>Phosphoproteomic analysis of nuclei-enriched fractions from Arabidopsis thaliana.</title>
        <authorList>
            <person name="Jones A.M.E."/>
            <person name="MacLean D."/>
            <person name="Studholme D.J."/>
            <person name="Serna-Sanz A."/>
            <person name="Andreasson E."/>
            <person name="Rathjen J.P."/>
            <person name="Peck S.C."/>
        </authorList>
    </citation>
    <scope>IDENTIFICATION BY MASS SPECTROMETRY [LARGE SCALE ANALYSIS]</scope>
</reference>
<name>CCAP3_ARATH</name>
<organism>
    <name type="scientific">Arabidopsis thaliana</name>
    <name type="common">Mouse-ear cress</name>
    <dbReference type="NCBI Taxonomy" id="3702"/>
    <lineage>
        <taxon>Eukaryota</taxon>
        <taxon>Viridiplantae</taxon>
        <taxon>Streptophyta</taxon>
        <taxon>Embryophyta</taxon>
        <taxon>Tracheophyta</taxon>
        <taxon>Spermatophyta</taxon>
        <taxon>Magnoliopsida</taxon>
        <taxon>eudicotyledons</taxon>
        <taxon>Gunneridae</taxon>
        <taxon>Pentapetalae</taxon>
        <taxon>rosids</taxon>
        <taxon>malvids</taxon>
        <taxon>Brassicales</taxon>
        <taxon>Brassicaceae</taxon>
        <taxon>Camelineae</taxon>
        <taxon>Arabidopsis</taxon>
    </lineage>
</organism>
<accession>Q9LX34</accession>
<accession>A0A178VGX3</accession>
<keyword id="KW-0938">Abscisic acid signaling pathway</keyword>
<keyword id="KW-0106">Calcium</keyword>
<keyword id="KW-0963">Cytoplasm</keyword>
<keyword id="KW-1185">Reference proteome</keyword>
<keyword id="KW-0677">Repeat</keyword>
<protein>
    <recommendedName>
        <fullName evidence="4">Cytosolic calcium-binding protein 3</fullName>
        <shortName evidence="4">Cytosolic Ca(2+)-binding protein 3</shortName>
    </recommendedName>
</protein>
<gene>
    <name evidence="4" type="primary">CCaP3</name>
    <name evidence="6" type="ordered locus">At3g59370</name>
    <name evidence="7" type="ORF">F25L23.230</name>
</gene>
<proteinExistence type="evidence at protein level"/>
<evidence type="ECO:0000250" key="1">
    <source>
        <dbReference type="UniProtKB" id="Q9SXE9"/>
    </source>
</evidence>
<evidence type="ECO:0000256" key="2">
    <source>
        <dbReference type="SAM" id="MobiDB-lite"/>
    </source>
</evidence>
<evidence type="ECO:0000269" key="3">
    <source>
    </source>
</evidence>
<evidence type="ECO:0000303" key="4">
    <source>
    </source>
</evidence>
<evidence type="ECO:0000305" key="5"/>
<evidence type="ECO:0000312" key="6">
    <source>
        <dbReference type="EMBL" id="AEE79913.1"/>
    </source>
</evidence>
<evidence type="ECO:0000312" key="7">
    <source>
        <dbReference type="EMBL" id="CAB91607.1"/>
    </source>
</evidence>
<comment type="function">
    <text evidence="1">Binds calcium Ca(2+) and may act as a signal mediator to buffer Ca(2+).</text>
</comment>
<comment type="subcellular location">
    <subcellularLocation>
        <location evidence="3">Cytoplasm</location>
        <location evidence="3">Cytosol</location>
    </subcellularLocation>
</comment>
<comment type="tissue specificity">
    <text evidence="3">Low levels in roots (e.g. in cambium) and barely expressed in stems, shoots, flowers, siliques and leaves.</text>
</comment>
<comment type="induction">
    <text evidence="3">Triggered by gibberellic acid (GA) but repressed by salicylic acid (SA) and abscisic acid (ABA) (PubMed:17145720). Suppressed by a high concentration of calcium Ca(2+) and of other metal ions, including magnesium, cadmium, manganese, nickel and zinc (PubMed:17145720). Repressed by glucose, mannitol and sorbitol, as well as by sucrose depletion (PubMed:17145720). Up-regulated by cold treatment (e.g. transfert from 22 to 4 degrees Celsius) (PubMed:17145720). Down-regulated by flagellin peptide flg22 (PubMed:17145720).</text>
</comment>
<dbReference type="EMBL" id="AL356014">
    <property type="protein sequence ID" value="CAB91607.1"/>
    <property type="molecule type" value="Genomic_DNA"/>
</dbReference>
<dbReference type="EMBL" id="CP002686">
    <property type="protein sequence ID" value="AEE79913.1"/>
    <property type="molecule type" value="Genomic_DNA"/>
</dbReference>
<dbReference type="EMBL" id="BT004741">
    <property type="protein sequence ID" value="AAO44007.1"/>
    <property type="molecule type" value="mRNA"/>
</dbReference>
<dbReference type="EMBL" id="AK228000">
    <property type="protein sequence ID" value="BAE99965.1"/>
    <property type="molecule type" value="mRNA"/>
</dbReference>
<dbReference type="PIR" id="T49005">
    <property type="entry name" value="T49005"/>
</dbReference>
<dbReference type="RefSeq" id="NP_191496.1">
    <property type="nucleotide sequence ID" value="NM_115799.4"/>
</dbReference>
<dbReference type="STRING" id="3702.Q9LX34"/>
<dbReference type="PaxDb" id="3702-AT3G59370.1"/>
<dbReference type="ProteomicsDB" id="182921"/>
<dbReference type="EnsemblPlants" id="AT3G59370.1">
    <property type="protein sequence ID" value="AT3G59370.1"/>
    <property type="gene ID" value="AT3G59370"/>
</dbReference>
<dbReference type="GeneID" id="825106"/>
<dbReference type="Gramene" id="AT3G59370.1">
    <property type="protein sequence ID" value="AT3G59370.1"/>
    <property type="gene ID" value="AT3G59370"/>
</dbReference>
<dbReference type="KEGG" id="ath:AT3G59370"/>
<dbReference type="Araport" id="AT3G59370"/>
<dbReference type="TAIR" id="AT3G59370"/>
<dbReference type="HOGENOM" id="CLU_154106_0_0_1"/>
<dbReference type="OrthoDB" id="10548780at2759"/>
<dbReference type="PRO" id="PR:Q9LX34"/>
<dbReference type="Proteomes" id="UP000006548">
    <property type="component" value="Chromosome 3"/>
</dbReference>
<dbReference type="ExpressionAtlas" id="Q9LX34">
    <property type="expression patterns" value="baseline and differential"/>
</dbReference>
<dbReference type="GO" id="GO:0005829">
    <property type="term" value="C:cytosol"/>
    <property type="evidence" value="ECO:0000314"/>
    <property type="project" value="UniProtKB"/>
</dbReference>
<dbReference type="GO" id="GO:0009738">
    <property type="term" value="P:abscisic acid-activated signaling pathway"/>
    <property type="evidence" value="ECO:0007669"/>
    <property type="project" value="UniProtKB-KW"/>
</dbReference>
<dbReference type="GO" id="GO:0071370">
    <property type="term" value="P:cellular response to gibberellin stimulus"/>
    <property type="evidence" value="ECO:0000270"/>
    <property type="project" value="UniProtKB"/>
</dbReference>
<dbReference type="GO" id="GO:0043617">
    <property type="term" value="P:cellular response to sucrose starvation"/>
    <property type="evidence" value="ECO:0000270"/>
    <property type="project" value="UniProtKB"/>
</dbReference>
<dbReference type="GO" id="GO:0009737">
    <property type="term" value="P:response to abscisic acid"/>
    <property type="evidence" value="ECO:0000270"/>
    <property type="project" value="UniProtKB"/>
</dbReference>
<dbReference type="GO" id="GO:0051592">
    <property type="term" value="P:response to calcium ion"/>
    <property type="evidence" value="ECO:0000270"/>
    <property type="project" value="UniProtKB"/>
</dbReference>
<dbReference type="GO" id="GO:0009409">
    <property type="term" value="P:response to cold"/>
    <property type="evidence" value="ECO:0000270"/>
    <property type="project" value="UniProtKB"/>
</dbReference>
<dbReference type="GO" id="GO:0009749">
    <property type="term" value="P:response to glucose"/>
    <property type="evidence" value="ECO:0000270"/>
    <property type="project" value="UniProtKB"/>
</dbReference>
<dbReference type="GO" id="GO:0010555">
    <property type="term" value="P:response to mannitol"/>
    <property type="evidence" value="ECO:0000270"/>
    <property type="project" value="UniProtKB"/>
</dbReference>
<dbReference type="GO" id="GO:0010038">
    <property type="term" value="P:response to metal ion"/>
    <property type="evidence" value="ECO:0000270"/>
    <property type="project" value="UniProtKB"/>
</dbReference>
<dbReference type="GO" id="GO:0002237">
    <property type="term" value="P:response to molecule of bacterial origin"/>
    <property type="evidence" value="ECO:0000270"/>
    <property type="project" value="UniProtKB"/>
</dbReference>
<dbReference type="GO" id="GO:0009751">
    <property type="term" value="P:response to salicylic acid"/>
    <property type="evidence" value="ECO:0000270"/>
    <property type="project" value="UniProtKB"/>
</dbReference>
<dbReference type="GO" id="GO:0072708">
    <property type="term" value="P:response to sorbitol"/>
    <property type="evidence" value="ECO:0000270"/>
    <property type="project" value="UniProtKB"/>
</dbReference>
<sequence length="95" mass="10581">MATVEVEHVTSVAVEIVETEVNQHPEEVFVEDAEKTNEDEEEKAAVITETPTVVEEEKKAEEVTETPEEKKTEALEEKQTEVAAAEEVAVEKAKE</sequence>